<keyword id="KW-0028">Amino-acid biosynthesis</keyword>
<keyword id="KW-0963">Cytoplasm</keyword>
<keyword id="KW-0220">Diaminopimelate biosynthesis</keyword>
<keyword id="KW-0457">Lysine biosynthesis</keyword>
<keyword id="KW-0520">NAD</keyword>
<keyword id="KW-0521">NADP</keyword>
<keyword id="KW-0560">Oxidoreductase</keyword>
<feature type="chain" id="PRO_1000117358" description="4-hydroxy-tetrahydrodipicolinate reductase">
    <location>
        <begin position="1"/>
        <end position="266"/>
    </location>
</feature>
<feature type="active site" description="Proton donor/acceptor" evidence="1">
    <location>
        <position position="155"/>
    </location>
</feature>
<feature type="active site" description="Proton donor" evidence="1">
    <location>
        <position position="159"/>
    </location>
</feature>
<feature type="binding site" evidence="1">
    <location>
        <begin position="10"/>
        <end position="15"/>
    </location>
    <ligand>
        <name>NAD(+)</name>
        <dbReference type="ChEBI" id="CHEBI:57540"/>
    </ligand>
</feature>
<feature type="binding site" evidence="1">
    <location>
        <position position="38"/>
    </location>
    <ligand>
        <name>NADP(+)</name>
        <dbReference type="ChEBI" id="CHEBI:58349"/>
    </ligand>
</feature>
<feature type="binding site" evidence="1">
    <location>
        <begin position="99"/>
        <end position="101"/>
    </location>
    <ligand>
        <name>NAD(+)</name>
        <dbReference type="ChEBI" id="CHEBI:57540"/>
    </ligand>
</feature>
<feature type="binding site" evidence="1">
    <location>
        <begin position="125"/>
        <end position="128"/>
    </location>
    <ligand>
        <name>NAD(+)</name>
        <dbReference type="ChEBI" id="CHEBI:57540"/>
    </ligand>
</feature>
<feature type="binding site" evidence="1">
    <location>
        <position position="156"/>
    </location>
    <ligand>
        <name>(S)-2,3,4,5-tetrahydrodipicolinate</name>
        <dbReference type="ChEBI" id="CHEBI:16845"/>
    </ligand>
</feature>
<feature type="binding site" evidence="1">
    <location>
        <begin position="165"/>
        <end position="166"/>
    </location>
    <ligand>
        <name>(S)-2,3,4,5-tetrahydrodipicolinate</name>
        <dbReference type="ChEBI" id="CHEBI:16845"/>
    </ligand>
</feature>
<organism>
    <name type="scientific">Bacillus cereus (strain AH820)</name>
    <dbReference type="NCBI Taxonomy" id="405535"/>
    <lineage>
        <taxon>Bacteria</taxon>
        <taxon>Bacillati</taxon>
        <taxon>Bacillota</taxon>
        <taxon>Bacilli</taxon>
        <taxon>Bacillales</taxon>
        <taxon>Bacillaceae</taxon>
        <taxon>Bacillus</taxon>
        <taxon>Bacillus cereus group</taxon>
    </lineage>
</organism>
<protein>
    <recommendedName>
        <fullName evidence="1">4-hydroxy-tetrahydrodipicolinate reductase</fullName>
        <shortName evidence="1">HTPA reductase</shortName>
        <ecNumber evidence="1">1.17.1.8</ecNumber>
    </recommendedName>
</protein>
<proteinExistence type="inferred from homology"/>
<name>DAPB_BACC0</name>
<sequence length="266" mass="29252">MKEMKVIIAGPRGRMGHEAVLLMERTEHFNLVAAVDYKHGGEKISDLPGMPALDAPIYADLHTCLEEVEADVLLDLTTPEVGKQHVTLAVERGLRSVIGTTGFTEEELKQLTETAKEKAVGTIIAPNFAIGAVLMMKFSQMAAKYFQDVEVIELHHDQKLDAPSGTAVKTVELIRQNRESKQQGHPNEVEQLEGARGANVDGIHIHSVRLPGLIAHQEVMFGGDGQMLTVRHDSFNRASFMSGVKLSIETVMNLDHLVYGLENIID</sequence>
<comment type="function">
    <text evidence="1">Catalyzes the conversion of 4-hydroxy-tetrahydrodipicolinate (HTPA) to tetrahydrodipicolinate.</text>
</comment>
<comment type="catalytic activity">
    <reaction evidence="1">
        <text>(S)-2,3,4,5-tetrahydrodipicolinate + NAD(+) + H2O = (2S,4S)-4-hydroxy-2,3,4,5-tetrahydrodipicolinate + NADH + H(+)</text>
        <dbReference type="Rhea" id="RHEA:35323"/>
        <dbReference type="ChEBI" id="CHEBI:15377"/>
        <dbReference type="ChEBI" id="CHEBI:15378"/>
        <dbReference type="ChEBI" id="CHEBI:16845"/>
        <dbReference type="ChEBI" id="CHEBI:57540"/>
        <dbReference type="ChEBI" id="CHEBI:57945"/>
        <dbReference type="ChEBI" id="CHEBI:67139"/>
        <dbReference type="EC" id="1.17.1.8"/>
    </reaction>
</comment>
<comment type="catalytic activity">
    <reaction evidence="1">
        <text>(S)-2,3,4,5-tetrahydrodipicolinate + NADP(+) + H2O = (2S,4S)-4-hydroxy-2,3,4,5-tetrahydrodipicolinate + NADPH + H(+)</text>
        <dbReference type="Rhea" id="RHEA:35331"/>
        <dbReference type="ChEBI" id="CHEBI:15377"/>
        <dbReference type="ChEBI" id="CHEBI:15378"/>
        <dbReference type="ChEBI" id="CHEBI:16845"/>
        <dbReference type="ChEBI" id="CHEBI:57783"/>
        <dbReference type="ChEBI" id="CHEBI:58349"/>
        <dbReference type="ChEBI" id="CHEBI:67139"/>
        <dbReference type="EC" id="1.17.1.8"/>
    </reaction>
</comment>
<comment type="pathway">
    <text evidence="1">Amino-acid biosynthesis; L-lysine biosynthesis via DAP pathway; (S)-tetrahydrodipicolinate from L-aspartate: step 4/4.</text>
</comment>
<comment type="subcellular location">
    <subcellularLocation>
        <location evidence="1">Cytoplasm</location>
    </subcellularLocation>
</comment>
<comment type="similarity">
    <text evidence="1">Belongs to the DapB family.</text>
</comment>
<comment type="caution">
    <text evidence="2">Was originally thought to be a dihydrodipicolinate reductase (DHDPR), catalyzing the conversion of dihydrodipicolinate to tetrahydrodipicolinate. However, it was shown in E.coli that the substrate of the enzymatic reaction is not dihydrodipicolinate (DHDP) but in fact (2S,4S)-4-hydroxy-2,3,4,5-tetrahydrodipicolinic acid (HTPA), the product released by the DapA-catalyzed reaction.</text>
</comment>
<reference key="1">
    <citation type="submission" date="2008-10" db="EMBL/GenBank/DDBJ databases">
        <title>Genome sequence of Bacillus cereus AH820.</title>
        <authorList>
            <person name="Dodson R.J."/>
            <person name="Durkin A.S."/>
            <person name="Rosovitz M.J."/>
            <person name="Rasko D.A."/>
            <person name="Hoffmaster A."/>
            <person name="Ravel J."/>
            <person name="Sutton G."/>
        </authorList>
    </citation>
    <scope>NUCLEOTIDE SEQUENCE [LARGE SCALE GENOMIC DNA]</scope>
    <source>
        <strain>AH820</strain>
    </source>
</reference>
<evidence type="ECO:0000255" key="1">
    <source>
        <dbReference type="HAMAP-Rule" id="MF_00102"/>
    </source>
</evidence>
<evidence type="ECO:0000305" key="2"/>
<accession>B7JH17</accession>
<dbReference type="EC" id="1.17.1.8" evidence="1"/>
<dbReference type="EMBL" id="CP001283">
    <property type="protein sequence ID" value="ACK88353.1"/>
    <property type="molecule type" value="Genomic_DNA"/>
</dbReference>
<dbReference type="RefSeq" id="WP_000661724.1">
    <property type="nucleotide sequence ID" value="NC_011773.1"/>
</dbReference>
<dbReference type="SMR" id="B7JH17"/>
<dbReference type="KEGG" id="bcu:BCAH820_1626"/>
<dbReference type="HOGENOM" id="CLU_047479_0_1_9"/>
<dbReference type="UniPathway" id="UPA00034">
    <property type="reaction ID" value="UER00018"/>
</dbReference>
<dbReference type="Proteomes" id="UP000001363">
    <property type="component" value="Chromosome"/>
</dbReference>
<dbReference type="GO" id="GO:0005829">
    <property type="term" value="C:cytosol"/>
    <property type="evidence" value="ECO:0007669"/>
    <property type="project" value="TreeGrafter"/>
</dbReference>
<dbReference type="GO" id="GO:0008839">
    <property type="term" value="F:4-hydroxy-tetrahydrodipicolinate reductase"/>
    <property type="evidence" value="ECO:0007669"/>
    <property type="project" value="UniProtKB-EC"/>
</dbReference>
<dbReference type="GO" id="GO:0051287">
    <property type="term" value="F:NAD binding"/>
    <property type="evidence" value="ECO:0007669"/>
    <property type="project" value="UniProtKB-UniRule"/>
</dbReference>
<dbReference type="GO" id="GO:0050661">
    <property type="term" value="F:NADP binding"/>
    <property type="evidence" value="ECO:0007669"/>
    <property type="project" value="UniProtKB-UniRule"/>
</dbReference>
<dbReference type="GO" id="GO:0016726">
    <property type="term" value="F:oxidoreductase activity, acting on CH or CH2 groups, NAD or NADP as acceptor"/>
    <property type="evidence" value="ECO:0007669"/>
    <property type="project" value="UniProtKB-UniRule"/>
</dbReference>
<dbReference type="GO" id="GO:0019877">
    <property type="term" value="P:diaminopimelate biosynthetic process"/>
    <property type="evidence" value="ECO:0007669"/>
    <property type="project" value="UniProtKB-UniRule"/>
</dbReference>
<dbReference type="GO" id="GO:0009089">
    <property type="term" value="P:lysine biosynthetic process via diaminopimelate"/>
    <property type="evidence" value="ECO:0007669"/>
    <property type="project" value="UniProtKB-UniRule"/>
</dbReference>
<dbReference type="CDD" id="cd02274">
    <property type="entry name" value="DHDPR_N"/>
    <property type="match status" value="1"/>
</dbReference>
<dbReference type="FunFam" id="3.30.360.10:FF:000009">
    <property type="entry name" value="4-hydroxy-tetrahydrodipicolinate reductase"/>
    <property type="match status" value="1"/>
</dbReference>
<dbReference type="FunFam" id="3.40.50.720:FF:000180">
    <property type="entry name" value="4-hydroxy-tetrahydrodipicolinate reductase"/>
    <property type="match status" value="1"/>
</dbReference>
<dbReference type="Gene3D" id="3.30.360.10">
    <property type="entry name" value="Dihydrodipicolinate Reductase, domain 2"/>
    <property type="match status" value="1"/>
</dbReference>
<dbReference type="Gene3D" id="3.40.50.720">
    <property type="entry name" value="NAD(P)-binding Rossmann-like Domain"/>
    <property type="match status" value="1"/>
</dbReference>
<dbReference type="HAMAP" id="MF_00102">
    <property type="entry name" value="DapB"/>
    <property type="match status" value="1"/>
</dbReference>
<dbReference type="InterPro" id="IPR022663">
    <property type="entry name" value="DapB_C"/>
</dbReference>
<dbReference type="InterPro" id="IPR000846">
    <property type="entry name" value="DapB_N"/>
</dbReference>
<dbReference type="InterPro" id="IPR022664">
    <property type="entry name" value="DapB_N_CS"/>
</dbReference>
<dbReference type="InterPro" id="IPR023940">
    <property type="entry name" value="DHDPR_bac"/>
</dbReference>
<dbReference type="InterPro" id="IPR036291">
    <property type="entry name" value="NAD(P)-bd_dom_sf"/>
</dbReference>
<dbReference type="NCBIfam" id="TIGR00036">
    <property type="entry name" value="dapB"/>
    <property type="match status" value="1"/>
</dbReference>
<dbReference type="PANTHER" id="PTHR20836:SF0">
    <property type="entry name" value="4-HYDROXY-TETRAHYDRODIPICOLINATE REDUCTASE 1, CHLOROPLASTIC-RELATED"/>
    <property type="match status" value="1"/>
</dbReference>
<dbReference type="PANTHER" id="PTHR20836">
    <property type="entry name" value="DIHYDRODIPICOLINATE REDUCTASE"/>
    <property type="match status" value="1"/>
</dbReference>
<dbReference type="Pfam" id="PF05173">
    <property type="entry name" value="DapB_C"/>
    <property type="match status" value="1"/>
</dbReference>
<dbReference type="Pfam" id="PF01113">
    <property type="entry name" value="DapB_N"/>
    <property type="match status" value="1"/>
</dbReference>
<dbReference type="PIRSF" id="PIRSF000161">
    <property type="entry name" value="DHPR"/>
    <property type="match status" value="1"/>
</dbReference>
<dbReference type="SUPFAM" id="SSF55347">
    <property type="entry name" value="Glyceraldehyde-3-phosphate dehydrogenase-like, C-terminal domain"/>
    <property type="match status" value="1"/>
</dbReference>
<dbReference type="SUPFAM" id="SSF51735">
    <property type="entry name" value="NAD(P)-binding Rossmann-fold domains"/>
    <property type="match status" value="1"/>
</dbReference>
<dbReference type="PROSITE" id="PS01298">
    <property type="entry name" value="DAPB"/>
    <property type="match status" value="1"/>
</dbReference>
<gene>
    <name evidence="1" type="primary">dapB</name>
    <name type="ordered locus">BCAH820_1626</name>
</gene>